<protein>
    <recommendedName>
        <fullName evidence="1">Bifunctional protein FolD</fullName>
    </recommendedName>
    <domain>
        <recommendedName>
            <fullName evidence="1">Methylenetetrahydrofolate dehydrogenase</fullName>
            <ecNumber evidence="1">1.5.1.5</ecNumber>
        </recommendedName>
    </domain>
    <domain>
        <recommendedName>
            <fullName evidence="1">Methenyltetrahydrofolate cyclohydrolase</fullName>
            <ecNumber evidence="1">3.5.4.9</ecNumber>
        </recommendedName>
    </domain>
</protein>
<sequence>MAAAILDGRALAAQRRQQLREQVEAIAPAVGRRPGLAVIMVGDNPASAVYVRNKERACEQTGIVSFGKHLPGDSSEAEIRALIEELNQDDRVDGILVQLPLPSHLDAVPLLLAIDPEKDADGLHPLNLGRLLRGEEGLRSCTPAGVMELLAANQIDPAGKKAVVIGRSILVGKPLAMMLLEANATVTIAHSRTPNLPEVCRQADIVVAAVGRPELVGADWIKPGAVVVDVGINRLEDGRLVGDVDYEAASAITSWITPVPGGVGPMTVAMLLHNTVLSYCRRSGQPFLS</sequence>
<reference key="1">
    <citation type="journal article" date="2007" name="Photosyn. Res.">
        <title>Complete nucleotide sequence of the freshwater unicellular cyanobacterium Synechococcus elongatus PCC 6301 chromosome: gene content and organization.</title>
        <authorList>
            <person name="Sugita C."/>
            <person name="Ogata K."/>
            <person name="Shikata M."/>
            <person name="Jikuya H."/>
            <person name="Takano J."/>
            <person name="Furumichi M."/>
            <person name="Kanehisa M."/>
            <person name="Omata T."/>
            <person name="Sugiura M."/>
            <person name="Sugita M."/>
        </authorList>
    </citation>
    <scope>NUCLEOTIDE SEQUENCE [LARGE SCALE GENOMIC DNA]</scope>
    <source>
        <strain>ATCC 27144 / PCC 6301 / SAUG 1402/1</strain>
    </source>
</reference>
<proteinExistence type="inferred from homology"/>
<comment type="function">
    <text evidence="1">Catalyzes the oxidation of 5,10-methylenetetrahydrofolate to 5,10-methenyltetrahydrofolate and then the hydrolysis of 5,10-methenyltetrahydrofolate to 10-formyltetrahydrofolate.</text>
</comment>
<comment type="catalytic activity">
    <reaction evidence="1">
        <text>(6R)-5,10-methylene-5,6,7,8-tetrahydrofolate + NADP(+) = (6R)-5,10-methenyltetrahydrofolate + NADPH</text>
        <dbReference type="Rhea" id="RHEA:22812"/>
        <dbReference type="ChEBI" id="CHEBI:15636"/>
        <dbReference type="ChEBI" id="CHEBI:57455"/>
        <dbReference type="ChEBI" id="CHEBI:57783"/>
        <dbReference type="ChEBI" id="CHEBI:58349"/>
        <dbReference type="EC" id="1.5.1.5"/>
    </reaction>
</comment>
<comment type="catalytic activity">
    <reaction evidence="1">
        <text>(6R)-5,10-methenyltetrahydrofolate + H2O = (6R)-10-formyltetrahydrofolate + H(+)</text>
        <dbReference type="Rhea" id="RHEA:23700"/>
        <dbReference type="ChEBI" id="CHEBI:15377"/>
        <dbReference type="ChEBI" id="CHEBI:15378"/>
        <dbReference type="ChEBI" id="CHEBI:57455"/>
        <dbReference type="ChEBI" id="CHEBI:195366"/>
        <dbReference type="EC" id="3.5.4.9"/>
    </reaction>
</comment>
<comment type="pathway">
    <text evidence="1">One-carbon metabolism; tetrahydrofolate interconversion.</text>
</comment>
<comment type="subunit">
    <text evidence="1">Homodimer.</text>
</comment>
<comment type="similarity">
    <text evidence="1">Belongs to the tetrahydrofolate dehydrogenase/cyclohydrolase family.</text>
</comment>
<comment type="sequence caution" evidence="2">
    <conflict type="erroneous initiation">
        <sequence resource="EMBL-CDS" id="BAD78949"/>
    </conflict>
</comment>
<feature type="chain" id="PRO_0000268530" description="Bifunctional protein FolD">
    <location>
        <begin position="1"/>
        <end position="289"/>
    </location>
</feature>
<feature type="binding site" evidence="1">
    <location>
        <begin position="166"/>
        <end position="168"/>
    </location>
    <ligand>
        <name>NADP(+)</name>
        <dbReference type="ChEBI" id="CHEBI:58349"/>
    </ligand>
</feature>
<feature type="binding site" evidence="1">
    <location>
        <position position="191"/>
    </location>
    <ligand>
        <name>NADP(+)</name>
        <dbReference type="ChEBI" id="CHEBI:58349"/>
    </ligand>
</feature>
<feature type="binding site" evidence="1">
    <location>
        <position position="232"/>
    </location>
    <ligand>
        <name>NADP(+)</name>
        <dbReference type="ChEBI" id="CHEBI:58349"/>
    </ligand>
</feature>
<dbReference type="EC" id="1.5.1.5" evidence="1"/>
<dbReference type="EC" id="3.5.4.9" evidence="1"/>
<dbReference type="EMBL" id="AP008231">
    <property type="protein sequence ID" value="BAD78949.1"/>
    <property type="status" value="ALT_INIT"/>
    <property type="molecule type" value="Genomic_DNA"/>
</dbReference>
<dbReference type="RefSeq" id="WP_011377721.1">
    <property type="nucleotide sequence ID" value="NZ_CP085785.1"/>
</dbReference>
<dbReference type="SMR" id="Q5N421"/>
<dbReference type="GeneID" id="72429623"/>
<dbReference type="KEGG" id="syc:syc0759_d"/>
<dbReference type="eggNOG" id="COG0190">
    <property type="taxonomic scope" value="Bacteria"/>
</dbReference>
<dbReference type="UniPathway" id="UPA00193"/>
<dbReference type="Proteomes" id="UP000001175">
    <property type="component" value="Chromosome"/>
</dbReference>
<dbReference type="GO" id="GO:0005829">
    <property type="term" value="C:cytosol"/>
    <property type="evidence" value="ECO:0007669"/>
    <property type="project" value="TreeGrafter"/>
</dbReference>
<dbReference type="GO" id="GO:0004477">
    <property type="term" value="F:methenyltetrahydrofolate cyclohydrolase activity"/>
    <property type="evidence" value="ECO:0007669"/>
    <property type="project" value="UniProtKB-UniRule"/>
</dbReference>
<dbReference type="GO" id="GO:0004488">
    <property type="term" value="F:methylenetetrahydrofolate dehydrogenase (NADP+) activity"/>
    <property type="evidence" value="ECO:0007669"/>
    <property type="project" value="UniProtKB-UniRule"/>
</dbReference>
<dbReference type="GO" id="GO:0000105">
    <property type="term" value="P:L-histidine biosynthetic process"/>
    <property type="evidence" value="ECO:0007669"/>
    <property type="project" value="UniProtKB-KW"/>
</dbReference>
<dbReference type="GO" id="GO:0009086">
    <property type="term" value="P:methionine biosynthetic process"/>
    <property type="evidence" value="ECO:0007669"/>
    <property type="project" value="UniProtKB-KW"/>
</dbReference>
<dbReference type="GO" id="GO:0006164">
    <property type="term" value="P:purine nucleotide biosynthetic process"/>
    <property type="evidence" value="ECO:0007669"/>
    <property type="project" value="UniProtKB-KW"/>
</dbReference>
<dbReference type="GO" id="GO:0035999">
    <property type="term" value="P:tetrahydrofolate interconversion"/>
    <property type="evidence" value="ECO:0007669"/>
    <property type="project" value="UniProtKB-UniRule"/>
</dbReference>
<dbReference type="CDD" id="cd01080">
    <property type="entry name" value="NAD_bind_m-THF_DH_Cyclohyd"/>
    <property type="match status" value="1"/>
</dbReference>
<dbReference type="FunFam" id="3.40.50.720:FF:000094">
    <property type="entry name" value="Bifunctional protein FolD"/>
    <property type="match status" value="1"/>
</dbReference>
<dbReference type="FunFam" id="3.40.50.10860:FF:000005">
    <property type="entry name" value="C-1-tetrahydrofolate synthase, cytoplasmic, putative"/>
    <property type="match status" value="1"/>
</dbReference>
<dbReference type="Gene3D" id="3.40.50.10860">
    <property type="entry name" value="Leucine Dehydrogenase, chain A, domain 1"/>
    <property type="match status" value="1"/>
</dbReference>
<dbReference type="Gene3D" id="3.40.50.720">
    <property type="entry name" value="NAD(P)-binding Rossmann-like Domain"/>
    <property type="match status" value="1"/>
</dbReference>
<dbReference type="HAMAP" id="MF_01576">
    <property type="entry name" value="THF_DHG_CYH"/>
    <property type="match status" value="1"/>
</dbReference>
<dbReference type="InterPro" id="IPR046346">
    <property type="entry name" value="Aminoacid_DH-like_N_sf"/>
</dbReference>
<dbReference type="InterPro" id="IPR036291">
    <property type="entry name" value="NAD(P)-bd_dom_sf"/>
</dbReference>
<dbReference type="InterPro" id="IPR000672">
    <property type="entry name" value="THF_DH/CycHdrlase"/>
</dbReference>
<dbReference type="InterPro" id="IPR020630">
    <property type="entry name" value="THF_DH/CycHdrlase_cat_dom"/>
</dbReference>
<dbReference type="InterPro" id="IPR020867">
    <property type="entry name" value="THF_DH/CycHdrlase_CS"/>
</dbReference>
<dbReference type="InterPro" id="IPR020631">
    <property type="entry name" value="THF_DH/CycHdrlase_NAD-bd_dom"/>
</dbReference>
<dbReference type="NCBIfam" id="NF008058">
    <property type="entry name" value="PRK10792.1"/>
    <property type="match status" value="1"/>
</dbReference>
<dbReference type="NCBIfam" id="NF010783">
    <property type="entry name" value="PRK14186.1"/>
    <property type="match status" value="1"/>
</dbReference>
<dbReference type="PANTHER" id="PTHR48099:SF5">
    <property type="entry name" value="C-1-TETRAHYDROFOLATE SYNTHASE, CYTOPLASMIC"/>
    <property type="match status" value="1"/>
</dbReference>
<dbReference type="PANTHER" id="PTHR48099">
    <property type="entry name" value="C-1-TETRAHYDROFOLATE SYNTHASE, CYTOPLASMIC-RELATED"/>
    <property type="match status" value="1"/>
</dbReference>
<dbReference type="Pfam" id="PF00763">
    <property type="entry name" value="THF_DHG_CYH"/>
    <property type="match status" value="1"/>
</dbReference>
<dbReference type="Pfam" id="PF02882">
    <property type="entry name" value="THF_DHG_CYH_C"/>
    <property type="match status" value="1"/>
</dbReference>
<dbReference type="PRINTS" id="PR00085">
    <property type="entry name" value="THFDHDRGNASE"/>
</dbReference>
<dbReference type="SUPFAM" id="SSF53223">
    <property type="entry name" value="Aminoacid dehydrogenase-like, N-terminal domain"/>
    <property type="match status" value="1"/>
</dbReference>
<dbReference type="SUPFAM" id="SSF51735">
    <property type="entry name" value="NAD(P)-binding Rossmann-fold domains"/>
    <property type="match status" value="1"/>
</dbReference>
<dbReference type="PROSITE" id="PS00767">
    <property type="entry name" value="THF_DHG_CYH_2"/>
    <property type="match status" value="1"/>
</dbReference>
<name>FOLD_SYNP6</name>
<organism>
    <name type="scientific">Synechococcus sp. (strain ATCC 27144 / PCC 6301 / SAUG 1402/1)</name>
    <name type="common">Anacystis nidulans</name>
    <dbReference type="NCBI Taxonomy" id="269084"/>
    <lineage>
        <taxon>Bacteria</taxon>
        <taxon>Bacillati</taxon>
        <taxon>Cyanobacteriota</taxon>
        <taxon>Cyanophyceae</taxon>
        <taxon>Synechococcales</taxon>
        <taxon>Synechococcaceae</taxon>
        <taxon>Synechococcus</taxon>
    </lineage>
</organism>
<accession>Q5N421</accession>
<gene>
    <name evidence="1" type="primary">folD</name>
    <name type="ordered locus">syc0759_d</name>
</gene>
<keyword id="KW-0028">Amino-acid biosynthesis</keyword>
<keyword id="KW-0368">Histidine biosynthesis</keyword>
<keyword id="KW-0378">Hydrolase</keyword>
<keyword id="KW-0486">Methionine biosynthesis</keyword>
<keyword id="KW-0511">Multifunctional enzyme</keyword>
<keyword id="KW-0521">NADP</keyword>
<keyword id="KW-0554">One-carbon metabolism</keyword>
<keyword id="KW-0560">Oxidoreductase</keyword>
<keyword id="KW-0658">Purine biosynthesis</keyword>
<evidence type="ECO:0000255" key="1">
    <source>
        <dbReference type="HAMAP-Rule" id="MF_01576"/>
    </source>
</evidence>
<evidence type="ECO:0000305" key="2"/>